<comment type="function">
    <text evidence="6">May regulate endosome-to-lysosome trafficking of membrane cargo, including EGFR.</text>
</comment>
<comment type="subunit">
    <text evidence="1 4 5 6">Interacts with RHOT1/Miro-1 and RHOT2/Miro-2 (By similarity). Interacts with GABA-A receptor and O-GlcNAc transferase. Interacts with HGS.</text>
</comment>
<comment type="interaction">
    <interactant intactId="EBI-1396483">
        <id>Q8R2H7</id>
    </interactant>
    <interactant intactId="EBI-713468">
        <id>Q12840</id>
        <label>KIF5A</label>
    </interactant>
    <organismsDiffer>true</organismsDiffer>
    <experiments>2</experiments>
</comment>
<comment type="subcellular location">
    <subcellularLocation>
        <location>Cytoplasm</location>
    </subcellularLocation>
    <subcellularLocation>
        <location>Early endosome</location>
    </subcellularLocation>
    <subcellularLocation>
        <location>Mitochondrion</location>
    </subcellularLocation>
    <text>Colocalizes with MGARP at the mitochondria. Translocates from the cytoplasm to the mitochondria in a MGARP-dependent manner.</text>
</comment>
<comment type="alternative products">
    <event type="alternative splicing"/>
    <isoform>
        <id>Q8R2H7-1</id>
        <name>1</name>
        <name>GRIF-1a</name>
        <sequence type="displayed"/>
    </isoform>
    <isoform>
        <id>Q8R2H7-2</id>
        <name>2</name>
        <name>GRIF-1b</name>
        <sequence type="described" ref="VSP_003786 VSP_003787"/>
    </isoform>
</comment>
<comment type="tissue specificity">
    <text evidence="6">Present in heart and brain (at protein level).</text>
</comment>
<comment type="PTM">
    <text evidence="5">O-glycosylated.</text>
</comment>
<comment type="similarity">
    <text evidence="10">Belongs to the milton family.</text>
</comment>
<comment type="sequence caution" evidence="10">
    <molecule>Isoform 2</molecule>
    <conflict type="frameshift">
        <sequence resource="EMBL-CDS" id="AAL84588"/>
    </conflict>
</comment>
<feature type="chain" id="PRO_0000064539" description="Trafficking kinesin-binding protein 2">
    <location>
        <begin position="1"/>
        <end position="913"/>
    </location>
</feature>
<feature type="domain" description="HAP1 N-terminal">
    <location>
        <begin position="48"/>
        <end position="353"/>
    </location>
</feature>
<feature type="region of interest" description="Disordered" evidence="3">
    <location>
        <begin position="11"/>
        <end position="31"/>
    </location>
</feature>
<feature type="region of interest" description="Interaction with HGS" evidence="6">
    <location>
        <begin position="359"/>
        <end position="507"/>
    </location>
</feature>
<feature type="region of interest" description="Disordered" evidence="3">
    <location>
        <begin position="442"/>
        <end position="478"/>
    </location>
</feature>
<feature type="region of interest" description="Disordered" evidence="3">
    <location>
        <begin position="688"/>
        <end position="707"/>
    </location>
</feature>
<feature type="region of interest" description="Disordered" evidence="3">
    <location>
        <begin position="769"/>
        <end position="790"/>
    </location>
</feature>
<feature type="coiled-coil region" evidence="2">
    <location>
        <begin position="134"/>
        <end position="355"/>
    </location>
</feature>
<feature type="coiled-coil region" evidence="2">
    <location>
        <begin position="502"/>
        <end position="519"/>
    </location>
</feature>
<feature type="compositionally biased region" description="Polar residues" evidence="3">
    <location>
        <begin position="11"/>
        <end position="21"/>
    </location>
</feature>
<feature type="compositionally biased region" description="Polar residues" evidence="3">
    <location>
        <begin position="453"/>
        <end position="463"/>
    </location>
</feature>
<feature type="compositionally biased region" description="Low complexity" evidence="3">
    <location>
        <begin position="688"/>
        <end position="704"/>
    </location>
</feature>
<feature type="compositionally biased region" description="Low complexity" evidence="3">
    <location>
        <begin position="780"/>
        <end position="789"/>
    </location>
</feature>
<feature type="splice variant" id="VSP_003786" description="In isoform 2." evidence="8 9">
    <original>VATSNPGKCLSFTNSTFTFT</original>
    <variation>ALVSHHCPVEAVRAVHPTRL</variation>
    <location>
        <begin position="653"/>
        <end position="672"/>
    </location>
</feature>
<feature type="splice variant" id="VSP_003787" description="In isoform 2." evidence="8 9">
    <location>
        <begin position="673"/>
        <end position="913"/>
    </location>
</feature>
<feature type="sequence variant" evidence="7">
    <original>E</original>
    <variation>V</variation>
    <location>
        <position position="609"/>
    </location>
</feature>
<feature type="sequence variant" evidence="7">
    <original>S</original>
    <variation>P</variation>
    <location>
        <position position="820"/>
    </location>
</feature>
<sequence>MSLSQNAIFKSQTGEENLMSSNHRDSESITDVCSNEDLPEVELVNLLEEQLPQYKLRVDSLFLYENQDWSQSSHQQQDASETLSPVLAEETFRYMILGTDRVEQMTKTYNDIDMVTHLLAERDRDLELAARIGQALLKRNHVLSEQNESLEEQLGQAFDQVNQLQHELSKKEELLRIVSIASEESETDSSCSTPLRFNESFSLSQGLLQLDMMHEKLKELEEENMALRSKACHIKTETFTYEEKEQKLINDCVNELRETNAQMSRMTEELSGKSDELLRYQEEISSLLSQIVDLQHKLKEHVIEKEELRLHLQASKDAQRQLTMELHELQDRNMECLGMLHESQEEIKELRNKAGPSAHLCFSQAYGVFAGESLAAEIEGTMRKKLSLDEESVFKQKAQQKRVFDTVKVANDTRGRSVTFPVLLPIPGSNRSSVIMTAKPFESGVQQTEDKTLPNQGSSTEVPGNSHPRDPPGLPEDSDLATALHRLSLRRQNYLSEKQFFAEEWERKLQILAEQEEEVSSCEALTENLASFCTDQSETTELGSAGCLRGFMPEKLQIVKPLEGSQTLHHWQQLAQPNLGTILDPRPGVITKGFTQMPKDAVYHISDLEEDEEVGITFQVQQPLQLEQKPAPPPPVTGIFLPPMTSAGGPVSVATSNPGKCLSFTNSTFTFTTCRILHPSDITQVTPSSGFPSLSCGSSAGSASNTAVNSPAASYRLSIGESITNRRDSTITFSSTRSLAKLLQERGISAKVYHSPASENPLLQLRPKALATPSTPPNSPSQSPCSSPVPFEPRVHVSENFLASRPAETFLQEMYGLRPSRAPPDVGQLKMNLVDRLKRLGIARVVKTPVPRENGKSREAEMGLQKPDSAVYLNSGGSLLGGLRRNQSLPVMMGSFGAPVCTTSPKMGILKED</sequence>
<evidence type="ECO:0000250" key="1"/>
<evidence type="ECO:0000255" key="2"/>
<evidence type="ECO:0000256" key="3">
    <source>
        <dbReference type="SAM" id="MobiDB-lite"/>
    </source>
</evidence>
<evidence type="ECO:0000269" key="4">
    <source>
    </source>
</evidence>
<evidence type="ECO:0000269" key="5">
    <source>
    </source>
</evidence>
<evidence type="ECO:0000269" key="6">
    <source>
    </source>
</evidence>
<evidence type="ECO:0000269" key="7">
    <source ref="2"/>
</evidence>
<evidence type="ECO:0000303" key="8">
    <source>
    </source>
</evidence>
<evidence type="ECO:0000303" key="9">
    <source>
    </source>
</evidence>
<evidence type="ECO:0000305" key="10"/>
<gene>
    <name type="primary">Trak2</name>
    <name type="synonym">Als2cr3</name>
    <name type="synonym">Grif1</name>
    <name type="synonym">Oip98</name>
</gene>
<name>TRAK2_RAT</name>
<accession>Q8R2H7</accession>
<accession>Q8R2H6</accession>
<accession>Q8R4G3</accession>
<proteinExistence type="evidence at protein level"/>
<reference key="1">
    <citation type="journal article" date="2002" name="J. Biol. Chem.">
        <title>Identification, molecular cloning, and characterization of a novel GABAA receptor-associated protein, GRIF-1.</title>
        <authorList>
            <person name="Beck M."/>
            <person name="Brickley K."/>
            <person name="Wilkinson H.L."/>
            <person name="Sharma S."/>
            <person name="Smith M."/>
            <person name="Chazot P.L."/>
            <person name="Pollard S."/>
            <person name="Stephenson F.A."/>
        </authorList>
    </citation>
    <scope>NUCLEOTIDE SEQUENCE [MRNA] (ISOFORMS 1 AND 2)</scope>
    <scope>SUBCELLULAR LOCATION</scope>
    <scope>INTERACTION WITH GABA-A RECEPTOR</scope>
    <source>
        <tissue>Brain</tissue>
    </source>
</reference>
<reference key="2">
    <citation type="submission" date="2003-02" db="EMBL/GenBank/DDBJ databases">
        <authorList>
            <person name="Stephenson F.A."/>
        </authorList>
    </citation>
    <scope>SEQUENCE REVISION TO 579 AND 595-596</scope>
    <scope>VARIANTS VAL-609 AND PRO-820</scope>
</reference>
<reference key="3">
    <citation type="journal article" date="2003" name="J. Biol. Chem.">
        <title>Identification and cloning of a novel family of coiled-coil domain proteins that interact with O-GlcNAc transferase.</title>
        <authorList>
            <person name="Iyer S.P.N."/>
            <person name="Akimoto Y."/>
            <person name="Hart G.W."/>
        </authorList>
    </citation>
    <scope>NUCLEOTIDE SEQUENCE [MRNA] (ISOFORM 2)</scope>
    <scope>INTERACTION WITH O-GLCNAC TRANSFERASE</scope>
    <scope>GLYCOSYLATION</scope>
    <source>
        <strain>Sprague-Dawley</strain>
        <tissue>Brain</tissue>
    </source>
</reference>
<reference key="4">
    <citation type="journal article" date="2004" name="Genome Res.">
        <title>The status, quality, and expansion of the NIH full-length cDNA project: the Mammalian Gene Collection (MGC).</title>
        <authorList>
            <consortium name="The MGC Project Team"/>
        </authorList>
    </citation>
    <scope>NUCLEOTIDE SEQUENCE [LARGE SCALE MRNA] (ISOFORM 1)</scope>
    <source>
        <tissue>Lung</tissue>
    </source>
</reference>
<reference key="5">
    <citation type="journal article" date="2006" name="J. Cell Sci.">
        <title>GRIF1 binds Hrs and is a new regulator of endosomal trafficking.</title>
        <authorList>
            <person name="Kirk E."/>
            <person name="Chin L.S."/>
            <person name="Li L."/>
        </authorList>
    </citation>
    <scope>INTERACTION WITH HGS</scope>
    <scope>TISSUE SPECIFICITY</scope>
    <scope>SUBCELLULAR LOCATION</scope>
    <scope>FUNCTION</scope>
</reference>
<reference key="6">
    <citation type="journal article" date="2009" name="J. Cell Biol.">
        <title>HUMMR, a hypoxia- and HIF-1alpha-inducible protein, alters mitochondrial distribution and transport.</title>
        <authorList>
            <person name="Li Y."/>
            <person name="Lim S."/>
            <person name="Hoffman D."/>
            <person name="Aspenstrom P."/>
            <person name="Federoff H.J."/>
            <person name="Rempe D.A."/>
        </authorList>
    </citation>
    <scope>SUBCELLULAR LOCATION</scope>
</reference>
<keyword id="KW-0025">Alternative splicing</keyword>
<keyword id="KW-0175">Coiled coil</keyword>
<keyword id="KW-0963">Cytoplasm</keyword>
<keyword id="KW-0967">Endosome</keyword>
<keyword id="KW-0325">Glycoprotein</keyword>
<keyword id="KW-0496">Mitochondrion</keyword>
<keyword id="KW-1185">Reference proteome</keyword>
<keyword id="KW-0813">Transport</keyword>
<dbReference type="EMBL" id="AJ288898">
    <property type="protein sequence ID" value="CAC81785.2"/>
    <property type="molecule type" value="mRNA"/>
</dbReference>
<dbReference type="EMBL" id="AJ288898">
    <property type="protein sequence ID" value="CAC81786.2"/>
    <property type="molecule type" value="mRNA"/>
</dbReference>
<dbReference type="EMBL" id="AF474163">
    <property type="protein sequence ID" value="AAL84588.1"/>
    <property type="status" value="ALT_FRAME"/>
    <property type="molecule type" value="mRNA"/>
</dbReference>
<dbReference type="EMBL" id="BC088393">
    <property type="protein sequence ID" value="AAH88393.1"/>
    <property type="molecule type" value="mRNA"/>
</dbReference>
<dbReference type="RefSeq" id="NP_598244.2">
    <molecule id="Q8R2H7-1"/>
    <property type="nucleotide sequence ID" value="NM_133560.2"/>
</dbReference>
<dbReference type="RefSeq" id="XP_063122690.1">
    <molecule id="Q8R2H7-1"/>
    <property type="nucleotide sequence ID" value="XM_063266620.1"/>
</dbReference>
<dbReference type="RefSeq" id="XP_063122691.1">
    <molecule id="Q8R2H7-1"/>
    <property type="nucleotide sequence ID" value="XM_063266621.1"/>
</dbReference>
<dbReference type="RefSeq" id="XP_063122692.1">
    <molecule id="Q8R2H7-1"/>
    <property type="nucleotide sequence ID" value="XM_063266622.1"/>
</dbReference>
<dbReference type="RefSeq" id="XP_063122693.1">
    <molecule id="Q8R2H7-2"/>
    <property type="nucleotide sequence ID" value="XM_063266623.1"/>
</dbReference>
<dbReference type="SMR" id="Q8R2H7"/>
<dbReference type="BioGRID" id="251098">
    <property type="interactions" value="5"/>
</dbReference>
<dbReference type="CORUM" id="Q8R2H7"/>
<dbReference type="FunCoup" id="Q8R2H7">
    <property type="interactions" value="2508"/>
</dbReference>
<dbReference type="IntAct" id="Q8R2H7">
    <property type="interactions" value="4"/>
</dbReference>
<dbReference type="MINT" id="Q8R2H7"/>
<dbReference type="STRING" id="10116.ENSRNOP00000015035"/>
<dbReference type="GlyGen" id="Q8R2H7">
    <property type="glycosylation" value="2 sites, 1 O-linked glycan (1 site)"/>
</dbReference>
<dbReference type="iPTMnet" id="Q8R2H7"/>
<dbReference type="PhosphoSitePlus" id="Q8R2H7"/>
<dbReference type="PaxDb" id="10116-ENSRNOP00000015035"/>
<dbReference type="ABCD" id="Q8R2H7">
    <property type="antibodies" value="1 sequenced antibody"/>
</dbReference>
<dbReference type="Ensembl" id="ENSRNOT00000014939.7">
    <molecule id="Q8R2H7-2"/>
    <property type="protein sequence ID" value="ENSRNOP00000014939.6"/>
    <property type="gene ID" value="ENSRNOG00000010881.9"/>
</dbReference>
<dbReference type="Ensembl" id="ENSRNOT00000015034.8">
    <molecule id="Q8R2H7-1"/>
    <property type="protein sequence ID" value="ENSRNOP00000015035.4"/>
    <property type="gene ID" value="ENSRNOG00000010881.9"/>
</dbReference>
<dbReference type="GeneID" id="171086"/>
<dbReference type="KEGG" id="rno:171086"/>
<dbReference type="UCSC" id="RGD:620915">
    <molecule id="Q8R2H7-1"/>
    <property type="organism name" value="rat"/>
</dbReference>
<dbReference type="AGR" id="RGD:620915"/>
<dbReference type="CTD" id="66008"/>
<dbReference type="RGD" id="620915">
    <property type="gene designation" value="Trak2"/>
</dbReference>
<dbReference type="eggNOG" id="KOG4360">
    <property type="taxonomic scope" value="Eukaryota"/>
</dbReference>
<dbReference type="GeneTree" id="ENSGT00940000158202"/>
<dbReference type="HOGENOM" id="CLU_013450_0_1_1"/>
<dbReference type="InParanoid" id="Q8R2H7"/>
<dbReference type="OrthoDB" id="10067624at2759"/>
<dbReference type="PhylomeDB" id="Q8R2H7"/>
<dbReference type="TreeFam" id="TF323495"/>
<dbReference type="Reactome" id="R-RNO-9013419">
    <property type="pathway name" value="RHOT2 GTPase cycle"/>
</dbReference>
<dbReference type="PRO" id="PR:Q8R2H7"/>
<dbReference type="Proteomes" id="UP000002494">
    <property type="component" value="Chromosome 9"/>
</dbReference>
<dbReference type="Bgee" id="ENSRNOG00000010881">
    <property type="expression patterns" value="Expressed in Ammon's horn and 19 other cell types or tissues"/>
</dbReference>
<dbReference type="ExpressionAtlas" id="Q8R2H7">
    <property type="expression patterns" value="baseline and differential"/>
</dbReference>
<dbReference type="GO" id="GO:0044295">
    <property type="term" value="C:axonal growth cone"/>
    <property type="evidence" value="ECO:0000314"/>
    <property type="project" value="RGD"/>
</dbReference>
<dbReference type="GO" id="GO:0005737">
    <property type="term" value="C:cytoplasm"/>
    <property type="evidence" value="ECO:0000314"/>
    <property type="project" value="UniProtKB"/>
</dbReference>
<dbReference type="GO" id="GO:0031410">
    <property type="term" value="C:cytoplasmic vesicle"/>
    <property type="evidence" value="ECO:0000318"/>
    <property type="project" value="GO_Central"/>
</dbReference>
<dbReference type="GO" id="GO:0030425">
    <property type="term" value="C:dendrite"/>
    <property type="evidence" value="ECO:0000314"/>
    <property type="project" value="RGD"/>
</dbReference>
<dbReference type="GO" id="GO:0032839">
    <property type="term" value="C:dendrite cytoplasm"/>
    <property type="evidence" value="ECO:0007669"/>
    <property type="project" value="GOC"/>
</dbReference>
<dbReference type="GO" id="GO:0005769">
    <property type="term" value="C:early endosome"/>
    <property type="evidence" value="ECO:0000314"/>
    <property type="project" value="RGD"/>
</dbReference>
<dbReference type="GO" id="GO:0005739">
    <property type="term" value="C:mitochondrion"/>
    <property type="evidence" value="ECO:0000314"/>
    <property type="project" value="UniProtKB"/>
</dbReference>
<dbReference type="GO" id="GO:0043025">
    <property type="term" value="C:neuronal cell body"/>
    <property type="evidence" value="ECO:0000314"/>
    <property type="project" value="RGD"/>
</dbReference>
<dbReference type="GO" id="GO:0005634">
    <property type="term" value="C:nucleus"/>
    <property type="evidence" value="ECO:0000314"/>
    <property type="project" value="UniProtKB"/>
</dbReference>
<dbReference type="GO" id="GO:0005886">
    <property type="term" value="C:plasma membrane"/>
    <property type="evidence" value="ECO:0000314"/>
    <property type="project" value="UniProtKB"/>
</dbReference>
<dbReference type="GO" id="GO:0019899">
    <property type="term" value="F:enzyme binding"/>
    <property type="evidence" value="ECO:0000353"/>
    <property type="project" value="RGD"/>
</dbReference>
<dbReference type="GO" id="GO:0050811">
    <property type="term" value="F:GABA receptor binding"/>
    <property type="evidence" value="ECO:0000314"/>
    <property type="project" value="MGI"/>
</dbReference>
<dbReference type="GO" id="GO:0019894">
    <property type="term" value="F:kinesin binding"/>
    <property type="evidence" value="ECO:0000314"/>
    <property type="project" value="RGD"/>
</dbReference>
<dbReference type="GO" id="GO:0017022">
    <property type="term" value="F:myosin binding"/>
    <property type="evidence" value="ECO:0000318"/>
    <property type="project" value="GO_Central"/>
</dbReference>
<dbReference type="GO" id="GO:0005102">
    <property type="term" value="F:signaling receptor binding"/>
    <property type="evidence" value="ECO:0000353"/>
    <property type="project" value="UniProtKB"/>
</dbReference>
<dbReference type="GO" id="GO:0030911">
    <property type="term" value="F:TPR domain binding"/>
    <property type="evidence" value="ECO:0000314"/>
    <property type="project" value="RGD"/>
</dbReference>
<dbReference type="GO" id="GO:0048813">
    <property type="term" value="P:dendrite morphogenesis"/>
    <property type="evidence" value="ECO:0000315"/>
    <property type="project" value="RGD"/>
</dbReference>
<dbReference type="GO" id="GO:0098939">
    <property type="term" value="P:dendritic transport of mitochondrion"/>
    <property type="evidence" value="ECO:0000315"/>
    <property type="project" value="RGD"/>
</dbReference>
<dbReference type="GO" id="GO:0008333">
    <property type="term" value="P:endosome to lysosome transport"/>
    <property type="evidence" value="ECO:0000314"/>
    <property type="project" value="RGD"/>
</dbReference>
<dbReference type="GO" id="GO:0048311">
    <property type="term" value="P:mitochondrion distribution"/>
    <property type="evidence" value="ECO:0000318"/>
    <property type="project" value="GO_Central"/>
</dbReference>
<dbReference type="GO" id="GO:0050771">
    <property type="term" value="P:negative regulation of axonogenesis"/>
    <property type="evidence" value="ECO:0000315"/>
    <property type="project" value="RGD"/>
</dbReference>
<dbReference type="GO" id="GO:0022008">
    <property type="term" value="P:neurogenesis"/>
    <property type="evidence" value="ECO:0000318"/>
    <property type="project" value="GO_Central"/>
</dbReference>
<dbReference type="GO" id="GO:0006836">
    <property type="term" value="P:neurotransmitter transport"/>
    <property type="evidence" value="ECO:0000303"/>
    <property type="project" value="UniProtKB"/>
</dbReference>
<dbReference type="GO" id="GO:0006493">
    <property type="term" value="P:protein O-linked glycosylation"/>
    <property type="evidence" value="ECO:0000314"/>
    <property type="project" value="UniProtKB"/>
</dbReference>
<dbReference type="GO" id="GO:0006605">
    <property type="term" value="P:protein targeting"/>
    <property type="evidence" value="ECO:0000314"/>
    <property type="project" value="UniProtKB"/>
</dbReference>
<dbReference type="GO" id="GO:0006357">
    <property type="term" value="P:regulation of transcription by RNA polymerase II"/>
    <property type="evidence" value="ECO:0000314"/>
    <property type="project" value="UniProtKB"/>
</dbReference>
<dbReference type="GO" id="GO:0047496">
    <property type="term" value="P:vesicle transport along microtubule"/>
    <property type="evidence" value="ECO:0000318"/>
    <property type="project" value="GO_Central"/>
</dbReference>
<dbReference type="InterPro" id="IPR006933">
    <property type="entry name" value="HAP1_N"/>
</dbReference>
<dbReference type="InterPro" id="IPR051946">
    <property type="entry name" value="Intracell_Traff-Reg"/>
</dbReference>
<dbReference type="InterPro" id="IPR022154">
    <property type="entry name" value="TRAK1/2_C"/>
</dbReference>
<dbReference type="PANTHER" id="PTHR15751">
    <property type="entry name" value="TRAFFICKING KINESIN-BINDING PROTEIN"/>
    <property type="match status" value="1"/>
</dbReference>
<dbReference type="PANTHER" id="PTHR15751:SF13">
    <property type="entry name" value="TRAFFICKING KINESIN-BINDING PROTEIN 2"/>
    <property type="match status" value="1"/>
</dbReference>
<dbReference type="Pfam" id="PF04849">
    <property type="entry name" value="HAP1_N"/>
    <property type="match status" value="1"/>
</dbReference>
<dbReference type="Pfam" id="PF12448">
    <property type="entry name" value="Milton"/>
    <property type="match status" value="1"/>
</dbReference>
<dbReference type="SMART" id="SM01424">
    <property type="entry name" value="HAP1_N"/>
    <property type="match status" value="1"/>
</dbReference>
<dbReference type="SMART" id="SM01423">
    <property type="entry name" value="Milton"/>
    <property type="match status" value="1"/>
</dbReference>
<organism>
    <name type="scientific">Rattus norvegicus</name>
    <name type="common">Rat</name>
    <dbReference type="NCBI Taxonomy" id="10116"/>
    <lineage>
        <taxon>Eukaryota</taxon>
        <taxon>Metazoa</taxon>
        <taxon>Chordata</taxon>
        <taxon>Craniata</taxon>
        <taxon>Vertebrata</taxon>
        <taxon>Euteleostomi</taxon>
        <taxon>Mammalia</taxon>
        <taxon>Eutheria</taxon>
        <taxon>Euarchontoglires</taxon>
        <taxon>Glires</taxon>
        <taxon>Rodentia</taxon>
        <taxon>Myomorpha</taxon>
        <taxon>Muroidea</taxon>
        <taxon>Muridae</taxon>
        <taxon>Murinae</taxon>
        <taxon>Rattus</taxon>
    </lineage>
</organism>
<protein>
    <recommendedName>
        <fullName>Trafficking kinesin-binding protein 2</fullName>
    </recommendedName>
    <alternativeName>
        <fullName>Amyotrophic lateral sclerosis 2 chromosomal region candidate gene 3 protein homolog</fullName>
    </alternativeName>
    <alternativeName>
        <fullName>GABA-A receptor-interacting factor 1</fullName>
        <shortName>GRIF-1</shortName>
    </alternativeName>
    <alternativeName>
        <fullName>O-GlcNAc transferase-interacting protein of 98 kDa</fullName>
    </alternativeName>
</protein>